<feature type="chain" id="PRO_0000158244" description="Imidazoleglycerol-phosphate dehydratase">
    <location>
        <begin position="1"/>
        <end position="224"/>
    </location>
</feature>
<name>HIS7_PICPA</name>
<accession>Q92447</accession>
<keyword id="KW-0028">Amino-acid biosynthesis</keyword>
<keyword id="KW-0368">Histidine biosynthesis</keyword>
<keyword id="KW-0456">Lyase</keyword>
<dbReference type="EC" id="4.2.1.19"/>
<dbReference type="EMBL" id="U69170">
    <property type="protein sequence ID" value="AAB18319.1"/>
    <property type="molecule type" value="Genomic_DNA"/>
</dbReference>
<dbReference type="SMR" id="Q92447"/>
<dbReference type="UniPathway" id="UPA00031">
    <property type="reaction ID" value="UER00011"/>
</dbReference>
<dbReference type="GO" id="GO:0004424">
    <property type="term" value="F:imidazoleglycerol-phosphate dehydratase activity"/>
    <property type="evidence" value="ECO:0007669"/>
    <property type="project" value="UniProtKB-EC"/>
</dbReference>
<dbReference type="GO" id="GO:0000105">
    <property type="term" value="P:L-histidine biosynthetic process"/>
    <property type="evidence" value="ECO:0007669"/>
    <property type="project" value="UniProtKB-UniPathway"/>
</dbReference>
<dbReference type="CDD" id="cd07914">
    <property type="entry name" value="IGPD"/>
    <property type="match status" value="1"/>
</dbReference>
<dbReference type="FunFam" id="3.30.230.40:FF:000005">
    <property type="entry name" value="Imidazoleglycerol-phosphate dehydratase"/>
    <property type="match status" value="1"/>
</dbReference>
<dbReference type="FunFam" id="3.30.230.40:FF:000001">
    <property type="entry name" value="Imidazoleglycerol-phosphate dehydratase HisB"/>
    <property type="match status" value="1"/>
</dbReference>
<dbReference type="Gene3D" id="3.30.230.40">
    <property type="entry name" value="Imidazole glycerol phosphate dehydratase, domain 1"/>
    <property type="match status" value="2"/>
</dbReference>
<dbReference type="HAMAP" id="MF_00076">
    <property type="entry name" value="HisB"/>
    <property type="match status" value="1"/>
</dbReference>
<dbReference type="InterPro" id="IPR038494">
    <property type="entry name" value="IGPD_sf"/>
</dbReference>
<dbReference type="InterPro" id="IPR000807">
    <property type="entry name" value="ImidazoleglycerolP_deHydtase"/>
</dbReference>
<dbReference type="InterPro" id="IPR020565">
    <property type="entry name" value="ImidazoleglycerP_deHydtase_CS"/>
</dbReference>
<dbReference type="InterPro" id="IPR020568">
    <property type="entry name" value="Ribosomal_Su5_D2-typ_SF"/>
</dbReference>
<dbReference type="PANTHER" id="PTHR23133:SF2">
    <property type="entry name" value="IMIDAZOLEGLYCEROL-PHOSPHATE DEHYDRATASE"/>
    <property type="match status" value="1"/>
</dbReference>
<dbReference type="PANTHER" id="PTHR23133">
    <property type="entry name" value="IMIDAZOLEGLYCEROL-PHOSPHATE DEHYDRATASE HIS7"/>
    <property type="match status" value="1"/>
</dbReference>
<dbReference type="Pfam" id="PF00475">
    <property type="entry name" value="IGPD"/>
    <property type="match status" value="1"/>
</dbReference>
<dbReference type="SUPFAM" id="SSF54211">
    <property type="entry name" value="Ribosomal protein S5 domain 2-like"/>
    <property type="match status" value="2"/>
</dbReference>
<dbReference type="PROSITE" id="PS00954">
    <property type="entry name" value="IGP_DEHYDRATASE_1"/>
    <property type="match status" value="1"/>
</dbReference>
<dbReference type="PROSITE" id="PS00955">
    <property type="entry name" value="IGP_DEHYDRATASE_2"/>
    <property type="match status" value="1"/>
</dbReference>
<protein>
    <recommendedName>
        <fullName>Imidazoleglycerol-phosphate dehydratase</fullName>
        <shortName>IGPD</shortName>
        <ecNumber>4.2.1.19</ecNumber>
    </recommendedName>
</protein>
<gene>
    <name type="primary">HIS3</name>
</gene>
<organism>
    <name type="scientific">Komagataella pastoris</name>
    <name type="common">Yeast</name>
    <name type="synonym">Pichia pastoris</name>
    <dbReference type="NCBI Taxonomy" id="4922"/>
    <lineage>
        <taxon>Eukaryota</taxon>
        <taxon>Fungi</taxon>
        <taxon>Dikarya</taxon>
        <taxon>Ascomycota</taxon>
        <taxon>Saccharomycotina</taxon>
        <taxon>Pichiomycetes</taxon>
        <taxon>Pichiales</taxon>
        <taxon>Pichiaceae</taxon>
        <taxon>Komagataella</taxon>
    </lineage>
</organism>
<evidence type="ECO:0000305" key="1"/>
<sequence length="224" mass="24166">MTGEHKRSSLIKRITNETKIQIALSLDGGPVSLAQSLFKDKDYSAEHAAQATSSQFISVNTGIGFLDHMLHALAKHGGWSVIIECVGDLHIDDHHSAEDTGIALGMAFKEALGHVRGIKRFGSGFAPLDEALSRAVIDMSNRPYAVVDLGLKREKIGDLSCEMIPHVLESFAQGAHVTMHVDCLRGFNDHHRAESAFKALAIAIKEAISSNGTDDIPSTKGVLF</sequence>
<comment type="catalytic activity">
    <reaction>
        <text>D-erythro-1-(imidazol-4-yl)glycerol 3-phosphate = 3-(imidazol-4-yl)-2-oxopropyl phosphate + H2O</text>
        <dbReference type="Rhea" id="RHEA:11040"/>
        <dbReference type="ChEBI" id="CHEBI:15377"/>
        <dbReference type="ChEBI" id="CHEBI:57766"/>
        <dbReference type="ChEBI" id="CHEBI:58278"/>
        <dbReference type="EC" id="4.2.1.19"/>
    </reaction>
</comment>
<comment type="pathway">
    <text>Amino-acid biosynthesis; L-histidine biosynthesis; L-histidine from 5-phospho-alpha-D-ribose 1-diphosphate: step 6/9.</text>
</comment>
<comment type="similarity">
    <text evidence="1">Belongs to the imidazoleglycerol-phosphate dehydratase family.</text>
</comment>
<proteinExistence type="inferred from homology"/>
<reference key="1">
    <citation type="submission" date="1996-09" db="EMBL/GenBank/DDBJ databases">
        <authorList>
            <person name="Logghe M."/>
            <person name="Molemans F."/>
            <person name="Contreras R."/>
            <person name="Fiers W."/>
        </authorList>
    </citation>
    <scope>NUCLEOTIDE SEQUENCE [GENOMIC DNA]</scope>
    <source>
        <strain>ATCC 76273 / CBS 7435 / CECT 11407 / NRRL Y-11430</strain>
    </source>
</reference>
<reference key="2">
    <citation type="journal article" date="1998" name="Yeast">
        <title>Cloning and sequence analysis of the Pichia pastoris TRP1, IPP1 and HIS3 genes.</title>
        <authorList>
            <person name="Cosano I.C."/>
            <person name="Alvarez P."/>
            <person name="Molina M."/>
            <person name="Nombela C."/>
        </authorList>
    </citation>
    <scope>NUCLEOTIDE SEQUENCE [GENOMIC DNA]</scope>
    <source>
        <strain>ATCC 76273 / CBS 7435 / CECT 11407 / NRRL Y-11430</strain>
    </source>
</reference>